<name>FPG_PARP8</name>
<feature type="initiator methionine" description="Removed" evidence="1">
    <location>
        <position position="1"/>
    </location>
</feature>
<feature type="chain" id="PRO_1000094036" description="Formamidopyrimidine-DNA glycosylase">
    <location>
        <begin position="2"/>
        <end position="276"/>
    </location>
</feature>
<feature type="zinc finger region" description="FPG-type" evidence="2">
    <location>
        <begin position="242"/>
        <end position="276"/>
    </location>
</feature>
<feature type="active site" description="Schiff-base intermediate with DNA" evidence="2">
    <location>
        <position position="2"/>
    </location>
</feature>
<feature type="active site" description="Proton donor" evidence="2">
    <location>
        <position position="3"/>
    </location>
</feature>
<feature type="active site" description="Proton donor; for beta-elimination activity" evidence="2">
    <location>
        <position position="58"/>
    </location>
</feature>
<feature type="active site" description="Proton donor; for delta-elimination activity" evidence="2">
    <location>
        <position position="266"/>
    </location>
</feature>
<feature type="binding site" evidence="2">
    <location>
        <position position="94"/>
    </location>
    <ligand>
        <name>DNA</name>
        <dbReference type="ChEBI" id="CHEBI:16991"/>
    </ligand>
</feature>
<feature type="binding site" evidence="2">
    <location>
        <position position="112"/>
    </location>
    <ligand>
        <name>DNA</name>
        <dbReference type="ChEBI" id="CHEBI:16991"/>
    </ligand>
</feature>
<feature type="binding site" evidence="2">
    <location>
        <position position="157"/>
    </location>
    <ligand>
        <name>DNA</name>
        <dbReference type="ChEBI" id="CHEBI:16991"/>
    </ligand>
</feature>
<proteinExistence type="inferred from homology"/>
<gene>
    <name evidence="2" type="primary">mutM</name>
    <name evidence="2" type="synonym">fpg</name>
    <name type="ordered locus">Bphy_0319</name>
</gene>
<sequence>MPELPEVEVTRRGIEPYVAGRRVERVDVRTPALRWPIPPGFARLLHGRLVRKVERRGKYLLFEIDEGWFIVHLGMTGTLRVLRNVPHPPAAAKHDHVDWIFDDFILRFRDPRRFGAVLWHPRSAGDVLDHPLLADLGVEPFAPSFSGALLHRKTRGRKVSVKQALLAGEIVVGVGNIYASESLFRAGIRPTTPAGRISLVRYDLLADAVRVTLAAAIEKGGSTLRDFVGSNGESGYFQLDYFVYDRAGQPCRVCGTPIKQIVQGQRSTYYCPTCQR</sequence>
<comment type="function">
    <text evidence="2">Involved in base excision repair of DNA damaged by oxidation or by mutagenic agents. Acts as a DNA glycosylase that recognizes and removes damaged bases. Has a preference for oxidized purines, such as 7,8-dihydro-8-oxoguanine (8-oxoG). Has AP (apurinic/apyrimidinic) lyase activity and introduces nicks in the DNA strand. Cleaves the DNA backbone by beta-delta elimination to generate a single-strand break at the site of the removed base with both 3'- and 5'-phosphates.</text>
</comment>
<comment type="catalytic activity">
    <reaction evidence="2">
        <text>Hydrolysis of DNA containing ring-opened 7-methylguanine residues, releasing 2,6-diamino-4-hydroxy-5-(N-methyl)formamidopyrimidine.</text>
        <dbReference type="EC" id="3.2.2.23"/>
    </reaction>
</comment>
<comment type="catalytic activity">
    <reaction evidence="2">
        <text>2'-deoxyribonucleotide-(2'-deoxyribose 5'-phosphate)-2'-deoxyribonucleotide-DNA = a 3'-end 2'-deoxyribonucleotide-(2,3-dehydro-2,3-deoxyribose 5'-phosphate)-DNA + a 5'-end 5'-phospho-2'-deoxyribonucleoside-DNA + H(+)</text>
        <dbReference type="Rhea" id="RHEA:66592"/>
        <dbReference type="Rhea" id="RHEA-COMP:13180"/>
        <dbReference type="Rhea" id="RHEA-COMP:16897"/>
        <dbReference type="Rhea" id="RHEA-COMP:17067"/>
        <dbReference type="ChEBI" id="CHEBI:15378"/>
        <dbReference type="ChEBI" id="CHEBI:136412"/>
        <dbReference type="ChEBI" id="CHEBI:157695"/>
        <dbReference type="ChEBI" id="CHEBI:167181"/>
        <dbReference type="EC" id="4.2.99.18"/>
    </reaction>
</comment>
<comment type="cofactor">
    <cofactor evidence="2">
        <name>Zn(2+)</name>
        <dbReference type="ChEBI" id="CHEBI:29105"/>
    </cofactor>
    <text evidence="2">Binds 1 zinc ion per subunit.</text>
</comment>
<comment type="subunit">
    <text evidence="2">Monomer.</text>
</comment>
<comment type="similarity">
    <text evidence="2">Belongs to the FPG family.</text>
</comment>
<reference key="1">
    <citation type="journal article" date="2014" name="Stand. Genomic Sci.">
        <title>Complete genome sequence of Burkholderia phymatum STM815(T), a broad host range and efficient nitrogen-fixing symbiont of Mimosa species.</title>
        <authorList>
            <person name="Moulin L."/>
            <person name="Klonowska A."/>
            <person name="Caroline B."/>
            <person name="Booth K."/>
            <person name="Vriezen J.A."/>
            <person name="Melkonian R."/>
            <person name="James E.K."/>
            <person name="Young J.P."/>
            <person name="Bena G."/>
            <person name="Hauser L."/>
            <person name="Land M."/>
            <person name="Kyrpides N."/>
            <person name="Bruce D."/>
            <person name="Chain P."/>
            <person name="Copeland A."/>
            <person name="Pitluck S."/>
            <person name="Woyke T."/>
            <person name="Lizotte-Waniewski M."/>
            <person name="Bristow J."/>
            <person name="Riley M."/>
        </authorList>
    </citation>
    <scope>NUCLEOTIDE SEQUENCE [LARGE SCALE GENOMIC DNA]</scope>
    <source>
        <strain>DSM 17167 / CIP 108236 / LMG 21445 / STM815</strain>
    </source>
</reference>
<dbReference type="EC" id="3.2.2.23" evidence="2"/>
<dbReference type="EC" id="4.2.99.18" evidence="2"/>
<dbReference type="EMBL" id="CP001043">
    <property type="protein sequence ID" value="ACC69512.1"/>
    <property type="molecule type" value="Genomic_DNA"/>
</dbReference>
<dbReference type="RefSeq" id="WP_012399739.1">
    <property type="nucleotide sequence ID" value="NC_010622.1"/>
</dbReference>
<dbReference type="SMR" id="B2JCP3"/>
<dbReference type="STRING" id="391038.Bphy_0319"/>
<dbReference type="KEGG" id="bph:Bphy_0319"/>
<dbReference type="eggNOG" id="COG0266">
    <property type="taxonomic scope" value="Bacteria"/>
</dbReference>
<dbReference type="HOGENOM" id="CLU_038423_1_1_4"/>
<dbReference type="OrthoDB" id="9800855at2"/>
<dbReference type="Proteomes" id="UP000001192">
    <property type="component" value="Chromosome 1"/>
</dbReference>
<dbReference type="GO" id="GO:0034039">
    <property type="term" value="F:8-oxo-7,8-dihydroguanine DNA N-glycosylase activity"/>
    <property type="evidence" value="ECO:0007669"/>
    <property type="project" value="TreeGrafter"/>
</dbReference>
<dbReference type="GO" id="GO:0140078">
    <property type="term" value="F:class I DNA-(apurinic or apyrimidinic site) endonuclease activity"/>
    <property type="evidence" value="ECO:0007669"/>
    <property type="project" value="UniProtKB-EC"/>
</dbReference>
<dbReference type="GO" id="GO:0003684">
    <property type="term" value="F:damaged DNA binding"/>
    <property type="evidence" value="ECO:0007669"/>
    <property type="project" value="InterPro"/>
</dbReference>
<dbReference type="GO" id="GO:0008270">
    <property type="term" value="F:zinc ion binding"/>
    <property type="evidence" value="ECO:0007669"/>
    <property type="project" value="UniProtKB-UniRule"/>
</dbReference>
<dbReference type="GO" id="GO:0006284">
    <property type="term" value="P:base-excision repair"/>
    <property type="evidence" value="ECO:0007669"/>
    <property type="project" value="InterPro"/>
</dbReference>
<dbReference type="CDD" id="cd08966">
    <property type="entry name" value="EcFpg-like_N"/>
    <property type="match status" value="1"/>
</dbReference>
<dbReference type="FunFam" id="1.10.8.50:FF:000003">
    <property type="entry name" value="Formamidopyrimidine-DNA glycosylase"/>
    <property type="match status" value="1"/>
</dbReference>
<dbReference type="Gene3D" id="1.10.8.50">
    <property type="match status" value="1"/>
</dbReference>
<dbReference type="Gene3D" id="3.20.190.10">
    <property type="entry name" value="MutM-like, N-terminal"/>
    <property type="match status" value="1"/>
</dbReference>
<dbReference type="HAMAP" id="MF_00103">
    <property type="entry name" value="Fapy_DNA_glycosyl"/>
    <property type="match status" value="1"/>
</dbReference>
<dbReference type="InterPro" id="IPR015886">
    <property type="entry name" value="DNA_glyclase/AP_lyase_DNA-bd"/>
</dbReference>
<dbReference type="InterPro" id="IPR015887">
    <property type="entry name" value="DNA_glyclase_Znf_dom_DNA_BS"/>
</dbReference>
<dbReference type="InterPro" id="IPR020629">
    <property type="entry name" value="Formamido-pyr_DNA_Glyclase"/>
</dbReference>
<dbReference type="InterPro" id="IPR012319">
    <property type="entry name" value="FPG_cat"/>
</dbReference>
<dbReference type="InterPro" id="IPR035937">
    <property type="entry name" value="MutM-like_N-ter"/>
</dbReference>
<dbReference type="InterPro" id="IPR010979">
    <property type="entry name" value="Ribosomal_uS13-like_H2TH"/>
</dbReference>
<dbReference type="InterPro" id="IPR000214">
    <property type="entry name" value="Znf_DNA_glyclase/AP_lyase"/>
</dbReference>
<dbReference type="InterPro" id="IPR010663">
    <property type="entry name" value="Znf_FPG/IleRS"/>
</dbReference>
<dbReference type="NCBIfam" id="TIGR00577">
    <property type="entry name" value="fpg"/>
    <property type="match status" value="1"/>
</dbReference>
<dbReference type="NCBIfam" id="NF002211">
    <property type="entry name" value="PRK01103.1"/>
    <property type="match status" value="1"/>
</dbReference>
<dbReference type="PANTHER" id="PTHR22993">
    <property type="entry name" value="FORMAMIDOPYRIMIDINE-DNA GLYCOSYLASE"/>
    <property type="match status" value="1"/>
</dbReference>
<dbReference type="PANTHER" id="PTHR22993:SF9">
    <property type="entry name" value="FORMAMIDOPYRIMIDINE-DNA GLYCOSYLASE"/>
    <property type="match status" value="1"/>
</dbReference>
<dbReference type="Pfam" id="PF01149">
    <property type="entry name" value="Fapy_DNA_glyco"/>
    <property type="match status" value="1"/>
</dbReference>
<dbReference type="Pfam" id="PF06831">
    <property type="entry name" value="H2TH"/>
    <property type="match status" value="1"/>
</dbReference>
<dbReference type="Pfam" id="PF06827">
    <property type="entry name" value="zf-FPG_IleRS"/>
    <property type="match status" value="1"/>
</dbReference>
<dbReference type="SMART" id="SM00898">
    <property type="entry name" value="Fapy_DNA_glyco"/>
    <property type="match status" value="1"/>
</dbReference>
<dbReference type="SMART" id="SM01232">
    <property type="entry name" value="H2TH"/>
    <property type="match status" value="1"/>
</dbReference>
<dbReference type="SUPFAM" id="SSF57716">
    <property type="entry name" value="Glucocorticoid receptor-like (DNA-binding domain)"/>
    <property type="match status" value="1"/>
</dbReference>
<dbReference type="SUPFAM" id="SSF81624">
    <property type="entry name" value="N-terminal domain of MutM-like DNA repair proteins"/>
    <property type="match status" value="1"/>
</dbReference>
<dbReference type="SUPFAM" id="SSF46946">
    <property type="entry name" value="S13-like H2TH domain"/>
    <property type="match status" value="1"/>
</dbReference>
<dbReference type="PROSITE" id="PS51068">
    <property type="entry name" value="FPG_CAT"/>
    <property type="match status" value="1"/>
</dbReference>
<dbReference type="PROSITE" id="PS01242">
    <property type="entry name" value="ZF_FPG_1"/>
    <property type="match status" value="1"/>
</dbReference>
<dbReference type="PROSITE" id="PS51066">
    <property type="entry name" value="ZF_FPG_2"/>
    <property type="match status" value="1"/>
</dbReference>
<keyword id="KW-0227">DNA damage</keyword>
<keyword id="KW-0234">DNA repair</keyword>
<keyword id="KW-0238">DNA-binding</keyword>
<keyword id="KW-0326">Glycosidase</keyword>
<keyword id="KW-0378">Hydrolase</keyword>
<keyword id="KW-0456">Lyase</keyword>
<keyword id="KW-0479">Metal-binding</keyword>
<keyword id="KW-0511">Multifunctional enzyme</keyword>
<keyword id="KW-1185">Reference proteome</keyword>
<keyword id="KW-0862">Zinc</keyword>
<keyword id="KW-0863">Zinc-finger</keyword>
<organism>
    <name type="scientific">Paraburkholderia phymatum (strain DSM 17167 / CIP 108236 / LMG 21445 / STM815)</name>
    <name type="common">Burkholderia phymatum</name>
    <dbReference type="NCBI Taxonomy" id="391038"/>
    <lineage>
        <taxon>Bacteria</taxon>
        <taxon>Pseudomonadati</taxon>
        <taxon>Pseudomonadota</taxon>
        <taxon>Betaproteobacteria</taxon>
        <taxon>Burkholderiales</taxon>
        <taxon>Burkholderiaceae</taxon>
        <taxon>Paraburkholderia</taxon>
    </lineage>
</organism>
<protein>
    <recommendedName>
        <fullName evidence="2">Formamidopyrimidine-DNA glycosylase</fullName>
        <shortName evidence="2">Fapy-DNA glycosylase</shortName>
        <ecNumber evidence="2">3.2.2.23</ecNumber>
    </recommendedName>
    <alternativeName>
        <fullName evidence="2">DNA-(apurinic or apyrimidinic site) lyase MutM</fullName>
        <shortName evidence="2">AP lyase MutM</shortName>
        <ecNumber evidence="2">4.2.99.18</ecNumber>
    </alternativeName>
</protein>
<evidence type="ECO:0000250" key="1"/>
<evidence type="ECO:0000255" key="2">
    <source>
        <dbReference type="HAMAP-Rule" id="MF_00103"/>
    </source>
</evidence>
<accession>B2JCP3</accession>